<sequence>MTKDETLLVFTLVVSSVSIFLFGILLFMVLISATRDFRERTKSKLVKIMIWAGIVVITFAIAVRIYPIFIFLLKERIKPLVEALYDKLPWIWEVSLSRYWDRLIDFLDRYLWACAQRIQTGIRKQKGEFVVTFSCRVKKRLYARAIEVGIHLSLLSNLFWILKTTLAVGYRLL</sequence>
<reference key="1">
    <citation type="journal article" date="2004" name="DNA Res.">
        <title>Complete nucleotide sequence of the sugarcane (Saccharum officinarum) chloroplast genome: a comparative analysis of four monocot chloroplast genomes.</title>
        <authorList>
            <person name="Asano T."/>
            <person name="Tsudzuki T."/>
            <person name="Takahashi S."/>
            <person name="Shimada H."/>
            <person name="Kadowaki K."/>
        </authorList>
    </citation>
    <scope>NUCLEOTIDE SEQUENCE [LARGE SCALE GENOMIC DNA]</scope>
</reference>
<protein>
    <recommendedName>
        <fullName>Uncharacterized protein ycf73</fullName>
    </recommendedName>
</protein>
<dbReference type="EMBL" id="AP006714">
    <property type="protein sequence ID" value="BAD27344.1"/>
    <property type="molecule type" value="Genomic_DNA"/>
</dbReference>
<dbReference type="EMBL" id="AP006714">
    <property type="protein sequence ID" value="BAD27376.1"/>
    <property type="molecule type" value="Genomic_DNA"/>
</dbReference>
<dbReference type="SMR" id="Q6ENR2"/>
<dbReference type="GO" id="GO:0009507">
    <property type="term" value="C:chloroplast"/>
    <property type="evidence" value="ECO:0007669"/>
    <property type="project" value="UniProtKB-SubCell"/>
</dbReference>
<name>YCF73_SACOF</name>
<keyword id="KW-0150">Chloroplast</keyword>
<keyword id="KW-0934">Plastid</keyword>
<organism>
    <name type="scientific">Saccharum officinarum</name>
    <name type="common">Sugarcane</name>
    <dbReference type="NCBI Taxonomy" id="4547"/>
    <lineage>
        <taxon>Eukaryota</taxon>
        <taxon>Viridiplantae</taxon>
        <taxon>Streptophyta</taxon>
        <taxon>Embryophyta</taxon>
        <taxon>Tracheophyta</taxon>
        <taxon>Spermatophyta</taxon>
        <taxon>Magnoliopsida</taxon>
        <taxon>Liliopsida</taxon>
        <taxon>Poales</taxon>
        <taxon>Poaceae</taxon>
        <taxon>PACMAD clade</taxon>
        <taxon>Panicoideae</taxon>
        <taxon>Andropogonodae</taxon>
        <taxon>Andropogoneae</taxon>
        <taxon>Saccharinae</taxon>
        <taxon>Saccharum</taxon>
        <taxon>Saccharum officinarum species complex</taxon>
    </lineage>
</organism>
<gene>
    <name type="primary">ycf73-A</name>
</gene>
<gene>
    <name type="primary">ycf73-B</name>
</gene>
<proteinExistence type="inferred from homology"/>
<feature type="chain" id="PRO_0000277361" description="Uncharacterized protein ycf73">
    <location>
        <begin position="1"/>
        <end position="173"/>
    </location>
</feature>
<accession>Q6ENR2</accession>
<geneLocation type="chloroplast"/>
<evidence type="ECO:0000305" key="1"/>
<comment type="subcellular location">
    <subcellularLocation>
        <location>Plastid</location>
        <location>Chloroplast</location>
    </subcellularLocation>
</comment>
<comment type="similarity">
    <text evidence="1">Belongs to the ycf73 family.</text>
</comment>